<gene>
    <name evidence="1" type="primary">mutS</name>
    <name type="ordered locus">Maqu_2087</name>
</gene>
<name>MUTS_MARN8</name>
<sequence>MTDLSKHTPMMQQYLKIKGEHPNEMVFYRMGDFYELFYDDAKKAAELLDITLTARGQSGGNPIPMAGVPFHSAEGYIARMVRAGQSIAICEQIGDPATSKGPVERKVVRIVTPGTLSDEAFLEDRRDNLLAAIYHHKEQFGFASLDISSGRFAVSELESLEALQGELQRLRPAEILISEDFPYTDILEGFTGVRRQGPWLFESDTALRVITQQLQVRDLTGFGCEDLTLAVCAAGCLLQYAKETQRTALPHIRKLTRERREDAVILDAASRRNLEIDTNLMGGQQHTLAWVMDRTATAMGARELRRWLNRPLRDVERVRQRQQAVSALLDGFHYEPVHDLLKRVGDIERILARVALRSARPRDLARLRDAFHALPELQEALKPVNSHHVVKLATVIGEYPELADLLERAIIDNPPVVIRDGGVIAEGFDEELDELRNISENAGQYLLDVETRERERTGISTLKVGYNRVHGYYIEISRAQSDQAPVDYIRRQTLKNAERFITPELKEFEDKALSAKSRALAREKGLYDDVLETVAEQLAPLQDAAQALAELDVLSNFAERATSLRFTAPEFTDQPGFDVEEGRHPVVEQLLDEPFVPNNLLMDTKRRMLVITGPNMGGKSTYMRQAALIALLAYTGSFVPANRAVLGPVDRIFTRMGSSDDIAGGRSTFMVEMTETANILHNATEHSLVLMDEVGRGTSTFDGLSLAWATAEHLAKNIRCYTLFATHYFELTQLADDLEHAVNVHLTATEHDDSIVFLHNVHDGPASQSYGLQVAKLAGVPQDVIRNAKTQLAHLEGLEAGSTPSPAPVSVNEPKPAAPTATKAASVEAVYQGDMFAMAEPSVVEQALEKLDLDGITPRDALNQLYELKGLLAK</sequence>
<accession>A1U2E8</accession>
<protein>
    <recommendedName>
        <fullName evidence="1">DNA mismatch repair protein MutS</fullName>
    </recommendedName>
</protein>
<dbReference type="EMBL" id="CP000514">
    <property type="protein sequence ID" value="ABM19167.1"/>
    <property type="molecule type" value="Genomic_DNA"/>
</dbReference>
<dbReference type="RefSeq" id="WP_011785559.1">
    <property type="nucleotide sequence ID" value="NC_008740.1"/>
</dbReference>
<dbReference type="SMR" id="A1U2E8"/>
<dbReference type="STRING" id="351348.Maqu_2087"/>
<dbReference type="KEGG" id="maq:Maqu_2087"/>
<dbReference type="eggNOG" id="COG0249">
    <property type="taxonomic scope" value="Bacteria"/>
</dbReference>
<dbReference type="HOGENOM" id="CLU_002472_4_0_6"/>
<dbReference type="OrthoDB" id="9802448at2"/>
<dbReference type="Proteomes" id="UP000000998">
    <property type="component" value="Chromosome"/>
</dbReference>
<dbReference type="GO" id="GO:0005829">
    <property type="term" value="C:cytosol"/>
    <property type="evidence" value="ECO:0007669"/>
    <property type="project" value="TreeGrafter"/>
</dbReference>
<dbReference type="GO" id="GO:0005524">
    <property type="term" value="F:ATP binding"/>
    <property type="evidence" value="ECO:0007669"/>
    <property type="project" value="UniProtKB-UniRule"/>
</dbReference>
<dbReference type="GO" id="GO:0140664">
    <property type="term" value="F:ATP-dependent DNA damage sensor activity"/>
    <property type="evidence" value="ECO:0007669"/>
    <property type="project" value="InterPro"/>
</dbReference>
<dbReference type="GO" id="GO:0003684">
    <property type="term" value="F:damaged DNA binding"/>
    <property type="evidence" value="ECO:0007669"/>
    <property type="project" value="UniProtKB-UniRule"/>
</dbReference>
<dbReference type="GO" id="GO:0030983">
    <property type="term" value="F:mismatched DNA binding"/>
    <property type="evidence" value="ECO:0007669"/>
    <property type="project" value="InterPro"/>
</dbReference>
<dbReference type="GO" id="GO:0006298">
    <property type="term" value="P:mismatch repair"/>
    <property type="evidence" value="ECO:0007669"/>
    <property type="project" value="UniProtKB-UniRule"/>
</dbReference>
<dbReference type="CDD" id="cd03284">
    <property type="entry name" value="ABC_MutS1"/>
    <property type="match status" value="1"/>
</dbReference>
<dbReference type="FunFam" id="1.10.1420.10:FF:000002">
    <property type="entry name" value="DNA mismatch repair protein MutS"/>
    <property type="match status" value="1"/>
</dbReference>
<dbReference type="FunFam" id="3.40.1170.10:FF:000001">
    <property type="entry name" value="DNA mismatch repair protein MutS"/>
    <property type="match status" value="1"/>
</dbReference>
<dbReference type="FunFam" id="3.40.50.300:FF:000283">
    <property type="entry name" value="DNA mismatch repair protein MutS"/>
    <property type="match status" value="1"/>
</dbReference>
<dbReference type="Gene3D" id="1.10.1420.10">
    <property type="match status" value="2"/>
</dbReference>
<dbReference type="Gene3D" id="6.10.140.430">
    <property type="match status" value="1"/>
</dbReference>
<dbReference type="Gene3D" id="3.40.1170.10">
    <property type="entry name" value="DNA repair protein MutS, domain I"/>
    <property type="match status" value="1"/>
</dbReference>
<dbReference type="Gene3D" id="3.30.420.110">
    <property type="entry name" value="MutS, connector domain"/>
    <property type="match status" value="1"/>
</dbReference>
<dbReference type="Gene3D" id="3.40.50.300">
    <property type="entry name" value="P-loop containing nucleotide triphosphate hydrolases"/>
    <property type="match status" value="1"/>
</dbReference>
<dbReference type="HAMAP" id="MF_00096">
    <property type="entry name" value="MutS"/>
    <property type="match status" value="1"/>
</dbReference>
<dbReference type="InterPro" id="IPR005748">
    <property type="entry name" value="DNA_mismatch_repair_MutS"/>
</dbReference>
<dbReference type="InterPro" id="IPR007695">
    <property type="entry name" value="DNA_mismatch_repair_MutS-lik_N"/>
</dbReference>
<dbReference type="InterPro" id="IPR017261">
    <property type="entry name" value="DNA_mismatch_repair_MutS/MSH"/>
</dbReference>
<dbReference type="InterPro" id="IPR000432">
    <property type="entry name" value="DNA_mismatch_repair_MutS_C"/>
</dbReference>
<dbReference type="InterPro" id="IPR007861">
    <property type="entry name" value="DNA_mismatch_repair_MutS_clamp"/>
</dbReference>
<dbReference type="InterPro" id="IPR007696">
    <property type="entry name" value="DNA_mismatch_repair_MutS_core"/>
</dbReference>
<dbReference type="InterPro" id="IPR016151">
    <property type="entry name" value="DNA_mismatch_repair_MutS_N"/>
</dbReference>
<dbReference type="InterPro" id="IPR036187">
    <property type="entry name" value="DNA_mismatch_repair_MutS_sf"/>
</dbReference>
<dbReference type="InterPro" id="IPR007860">
    <property type="entry name" value="DNA_mmatch_repair_MutS_con_dom"/>
</dbReference>
<dbReference type="InterPro" id="IPR045076">
    <property type="entry name" value="MutS"/>
</dbReference>
<dbReference type="InterPro" id="IPR036678">
    <property type="entry name" value="MutS_con_dom_sf"/>
</dbReference>
<dbReference type="InterPro" id="IPR027417">
    <property type="entry name" value="P-loop_NTPase"/>
</dbReference>
<dbReference type="NCBIfam" id="TIGR01070">
    <property type="entry name" value="mutS1"/>
    <property type="match status" value="1"/>
</dbReference>
<dbReference type="NCBIfam" id="NF003810">
    <property type="entry name" value="PRK05399.1"/>
    <property type="match status" value="1"/>
</dbReference>
<dbReference type="PANTHER" id="PTHR11361:SF34">
    <property type="entry name" value="DNA MISMATCH REPAIR PROTEIN MSH1, MITOCHONDRIAL"/>
    <property type="match status" value="1"/>
</dbReference>
<dbReference type="PANTHER" id="PTHR11361">
    <property type="entry name" value="DNA MISMATCH REPAIR PROTEIN MUTS FAMILY MEMBER"/>
    <property type="match status" value="1"/>
</dbReference>
<dbReference type="Pfam" id="PF01624">
    <property type="entry name" value="MutS_I"/>
    <property type="match status" value="1"/>
</dbReference>
<dbReference type="Pfam" id="PF05188">
    <property type="entry name" value="MutS_II"/>
    <property type="match status" value="1"/>
</dbReference>
<dbReference type="Pfam" id="PF05192">
    <property type="entry name" value="MutS_III"/>
    <property type="match status" value="1"/>
</dbReference>
<dbReference type="Pfam" id="PF05190">
    <property type="entry name" value="MutS_IV"/>
    <property type="match status" value="1"/>
</dbReference>
<dbReference type="Pfam" id="PF00488">
    <property type="entry name" value="MutS_V"/>
    <property type="match status" value="1"/>
</dbReference>
<dbReference type="PIRSF" id="PIRSF037677">
    <property type="entry name" value="DNA_mis_repair_Msh6"/>
    <property type="match status" value="1"/>
</dbReference>
<dbReference type="SMART" id="SM00534">
    <property type="entry name" value="MUTSac"/>
    <property type="match status" value="1"/>
</dbReference>
<dbReference type="SMART" id="SM00533">
    <property type="entry name" value="MUTSd"/>
    <property type="match status" value="1"/>
</dbReference>
<dbReference type="SUPFAM" id="SSF55271">
    <property type="entry name" value="DNA repair protein MutS, domain I"/>
    <property type="match status" value="1"/>
</dbReference>
<dbReference type="SUPFAM" id="SSF53150">
    <property type="entry name" value="DNA repair protein MutS, domain II"/>
    <property type="match status" value="1"/>
</dbReference>
<dbReference type="SUPFAM" id="SSF48334">
    <property type="entry name" value="DNA repair protein MutS, domain III"/>
    <property type="match status" value="1"/>
</dbReference>
<dbReference type="SUPFAM" id="SSF52540">
    <property type="entry name" value="P-loop containing nucleoside triphosphate hydrolases"/>
    <property type="match status" value="1"/>
</dbReference>
<dbReference type="PROSITE" id="PS00486">
    <property type="entry name" value="DNA_MISMATCH_REPAIR_2"/>
    <property type="match status" value="1"/>
</dbReference>
<evidence type="ECO:0000255" key="1">
    <source>
        <dbReference type="HAMAP-Rule" id="MF_00096"/>
    </source>
</evidence>
<evidence type="ECO:0000256" key="2">
    <source>
        <dbReference type="SAM" id="MobiDB-lite"/>
    </source>
</evidence>
<comment type="function">
    <text evidence="1">This protein is involved in the repair of mismatches in DNA. It is possible that it carries out the mismatch recognition step. This protein has a weak ATPase activity.</text>
</comment>
<comment type="similarity">
    <text evidence="1">Belongs to the DNA mismatch repair MutS family.</text>
</comment>
<keyword id="KW-0067">ATP-binding</keyword>
<keyword id="KW-0227">DNA damage</keyword>
<keyword id="KW-0234">DNA repair</keyword>
<keyword id="KW-0238">DNA-binding</keyword>
<keyword id="KW-0547">Nucleotide-binding</keyword>
<organism>
    <name type="scientific">Marinobacter nauticus (strain ATCC 700491 / DSM 11845 / VT8)</name>
    <name type="common">Marinobacter aquaeolei</name>
    <dbReference type="NCBI Taxonomy" id="351348"/>
    <lineage>
        <taxon>Bacteria</taxon>
        <taxon>Pseudomonadati</taxon>
        <taxon>Pseudomonadota</taxon>
        <taxon>Gammaproteobacteria</taxon>
        <taxon>Pseudomonadales</taxon>
        <taxon>Marinobacteraceae</taxon>
        <taxon>Marinobacter</taxon>
    </lineage>
</organism>
<proteinExistence type="inferred from homology"/>
<feature type="chain" id="PRO_1000008075" description="DNA mismatch repair protein MutS">
    <location>
        <begin position="1"/>
        <end position="874"/>
    </location>
</feature>
<feature type="region of interest" description="Disordered" evidence="2">
    <location>
        <begin position="799"/>
        <end position="820"/>
    </location>
</feature>
<feature type="binding site" evidence="1">
    <location>
        <begin position="613"/>
        <end position="620"/>
    </location>
    <ligand>
        <name>ATP</name>
        <dbReference type="ChEBI" id="CHEBI:30616"/>
    </ligand>
</feature>
<reference key="1">
    <citation type="journal article" date="2011" name="Appl. Environ. Microbiol.">
        <title>Genomic potential of Marinobacter aquaeolei, a biogeochemical 'opportunitroph'.</title>
        <authorList>
            <person name="Singer E."/>
            <person name="Webb E.A."/>
            <person name="Nelson W.C."/>
            <person name="Heidelberg J.F."/>
            <person name="Ivanova N."/>
            <person name="Pati A."/>
            <person name="Edwards K.J."/>
        </authorList>
    </citation>
    <scope>NUCLEOTIDE SEQUENCE [LARGE SCALE GENOMIC DNA]</scope>
    <source>
        <strain>ATCC 700491 / DSM 11845 / VT8</strain>
    </source>
</reference>